<evidence type="ECO:0000255" key="1">
    <source>
        <dbReference type="HAMAP-Rule" id="MF_00090"/>
    </source>
</evidence>
<evidence type="ECO:0000256" key="2">
    <source>
        <dbReference type="SAM" id="MobiDB-lite"/>
    </source>
</evidence>
<organism>
    <name type="scientific">Burkholderia orbicola (strain AU 1054)</name>
    <dbReference type="NCBI Taxonomy" id="331271"/>
    <lineage>
        <taxon>Bacteria</taxon>
        <taxon>Pseudomonadati</taxon>
        <taxon>Pseudomonadota</taxon>
        <taxon>Betaproteobacteria</taxon>
        <taxon>Burkholderiales</taxon>
        <taxon>Burkholderiaceae</taxon>
        <taxon>Burkholderia</taxon>
        <taxon>Burkholderia cepacia complex</taxon>
        <taxon>Burkholderia orbicola</taxon>
    </lineage>
</organism>
<feature type="chain" id="PRO_0000351826" description="Protein-L-isoaspartate O-methyltransferase">
    <location>
        <begin position="1"/>
        <end position="310"/>
    </location>
</feature>
<feature type="region of interest" description="Disordered" evidence="2">
    <location>
        <begin position="1"/>
        <end position="41"/>
    </location>
</feature>
<feature type="compositionally biased region" description="Basic and acidic residues" evidence="2">
    <location>
        <begin position="14"/>
        <end position="29"/>
    </location>
</feature>
<feature type="active site" evidence="1">
    <location>
        <position position="157"/>
    </location>
</feature>
<name>PIMT_BURO1</name>
<accession>Q1BGY4</accession>
<sequence>MSGERAKRFPLALEDLKRAPRKSEGRPGERQTAGAVPKAADKPAAVLKPVAVKPAAVRAPLPGIAAAKPATAPKPTALKPALPKPAAPSIAPAGAFALTSERVRERMVERLRANGVTDARVLDAMAAVPRHLFVDPGLATQAYEDSALPIGHQQTISKPSVVARMIELAMAGRTLERVLEIGTGCGYQAAVLSHVARDVYSIERIKPLYERAKLNLRPLRVPNIRLHYGDGRVGLPSAAPFDAIVIAAAGLDVPQALLEQLAIGGRLVAPVGAQSGQHQVLTLVERVAHAQWRESRLDRVFFVPLKSGVI</sequence>
<gene>
    <name evidence="1" type="primary">pcm</name>
    <name type="ordered locus">Bcen_6257</name>
</gene>
<comment type="function">
    <text evidence="1">Catalyzes the methyl esterification of L-isoaspartyl residues in peptides and proteins that result from spontaneous decomposition of normal L-aspartyl and L-asparaginyl residues. It plays a role in the repair and/or degradation of damaged proteins.</text>
</comment>
<comment type="catalytic activity">
    <reaction evidence="1">
        <text>[protein]-L-isoaspartate + S-adenosyl-L-methionine = [protein]-L-isoaspartate alpha-methyl ester + S-adenosyl-L-homocysteine</text>
        <dbReference type="Rhea" id="RHEA:12705"/>
        <dbReference type="Rhea" id="RHEA-COMP:12143"/>
        <dbReference type="Rhea" id="RHEA-COMP:12144"/>
        <dbReference type="ChEBI" id="CHEBI:57856"/>
        <dbReference type="ChEBI" id="CHEBI:59789"/>
        <dbReference type="ChEBI" id="CHEBI:90596"/>
        <dbReference type="ChEBI" id="CHEBI:90598"/>
        <dbReference type="EC" id="2.1.1.77"/>
    </reaction>
</comment>
<comment type="subcellular location">
    <subcellularLocation>
        <location evidence="1">Cytoplasm</location>
    </subcellularLocation>
</comment>
<comment type="similarity">
    <text evidence="1">Belongs to the methyltransferase superfamily. L-isoaspartyl/D-aspartyl protein methyltransferase family.</text>
</comment>
<keyword id="KW-0963">Cytoplasm</keyword>
<keyword id="KW-0489">Methyltransferase</keyword>
<keyword id="KW-0949">S-adenosyl-L-methionine</keyword>
<keyword id="KW-0808">Transferase</keyword>
<dbReference type="EC" id="2.1.1.77" evidence="1"/>
<dbReference type="EMBL" id="CP000380">
    <property type="protein sequence ID" value="ABF81121.1"/>
    <property type="molecule type" value="Genomic_DNA"/>
</dbReference>
<dbReference type="SMR" id="Q1BGY4"/>
<dbReference type="HOGENOM" id="CLU_055432_1_0_4"/>
<dbReference type="GO" id="GO:0005737">
    <property type="term" value="C:cytoplasm"/>
    <property type="evidence" value="ECO:0007669"/>
    <property type="project" value="UniProtKB-SubCell"/>
</dbReference>
<dbReference type="GO" id="GO:0004719">
    <property type="term" value="F:protein-L-isoaspartate (D-aspartate) O-methyltransferase activity"/>
    <property type="evidence" value="ECO:0007669"/>
    <property type="project" value="UniProtKB-UniRule"/>
</dbReference>
<dbReference type="GO" id="GO:0032259">
    <property type="term" value="P:methylation"/>
    <property type="evidence" value="ECO:0007669"/>
    <property type="project" value="UniProtKB-KW"/>
</dbReference>
<dbReference type="GO" id="GO:0036211">
    <property type="term" value="P:protein modification process"/>
    <property type="evidence" value="ECO:0007669"/>
    <property type="project" value="UniProtKB-UniRule"/>
</dbReference>
<dbReference type="GO" id="GO:0030091">
    <property type="term" value="P:protein repair"/>
    <property type="evidence" value="ECO:0007669"/>
    <property type="project" value="UniProtKB-UniRule"/>
</dbReference>
<dbReference type="CDD" id="cd02440">
    <property type="entry name" value="AdoMet_MTases"/>
    <property type="match status" value="1"/>
</dbReference>
<dbReference type="FunFam" id="3.40.50.150:FF:000010">
    <property type="entry name" value="Protein-L-isoaspartate O-methyltransferase"/>
    <property type="match status" value="1"/>
</dbReference>
<dbReference type="Gene3D" id="3.40.50.150">
    <property type="entry name" value="Vaccinia Virus protein VP39"/>
    <property type="match status" value="1"/>
</dbReference>
<dbReference type="HAMAP" id="MF_00090">
    <property type="entry name" value="PIMT"/>
    <property type="match status" value="1"/>
</dbReference>
<dbReference type="InterPro" id="IPR000682">
    <property type="entry name" value="PCMT"/>
</dbReference>
<dbReference type="InterPro" id="IPR029063">
    <property type="entry name" value="SAM-dependent_MTases_sf"/>
</dbReference>
<dbReference type="NCBIfam" id="TIGR00080">
    <property type="entry name" value="pimt"/>
    <property type="match status" value="1"/>
</dbReference>
<dbReference type="NCBIfam" id="NF001453">
    <property type="entry name" value="PRK00312.1"/>
    <property type="match status" value="1"/>
</dbReference>
<dbReference type="PANTHER" id="PTHR11579">
    <property type="entry name" value="PROTEIN-L-ISOASPARTATE O-METHYLTRANSFERASE"/>
    <property type="match status" value="1"/>
</dbReference>
<dbReference type="PANTHER" id="PTHR11579:SF0">
    <property type="entry name" value="PROTEIN-L-ISOASPARTATE(D-ASPARTATE) O-METHYLTRANSFERASE"/>
    <property type="match status" value="1"/>
</dbReference>
<dbReference type="Pfam" id="PF01135">
    <property type="entry name" value="PCMT"/>
    <property type="match status" value="1"/>
</dbReference>
<dbReference type="SUPFAM" id="SSF53335">
    <property type="entry name" value="S-adenosyl-L-methionine-dependent methyltransferases"/>
    <property type="match status" value="1"/>
</dbReference>
<dbReference type="PROSITE" id="PS01279">
    <property type="entry name" value="PCMT"/>
    <property type="match status" value="1"/>
</dbReference>
<reference key="1">
    <citation type="submission" date="2006-05" db="EMBL/GenBank/DDBJ databases">
        <title>Complete sequence of chromosome 3 of Burkholderia cenocepacia AU 1054.</title>
        <authorList>
            <consortium name="US DOE Joint Genome Institute"/>
            <person name="Copeland A."/>
            <person name="Lucas S."/>
            <person name="Lapidus A."/>
            <person name="Barry K."/>
            <person name="Detter J.C."/>
            <person name="Glavina del Rio T."/>
            <person name="Hammon N."/>
            <person name="Israni S."/>
            <person name="Dalin E."/>
            <person name="Tice H."/>
            <person name="Pitluck S."/>
            <person name="Chain P."/>
            <person name="Malfatti S."/>
            <person name="Shin M."/>
            <person name="Vergez L."/>
            <person name="Schmutz J."/>
            <person name="Larimer F."/>
            <person name="Land M."/>
            <person name="Hauser L."/>
            <person name="Kyrpides N."/>
            <person name="Lykidis A."/>
            <person name="LiPuma J.J."/>
            <person name="Konstantinidis K."/>
            <person name="Tiedje J.M."/>
            <person name="Richardson P."/>
        </authorList>
    </citation>
    <scope>NUCLEOTIDE SEQUENCE [LARGE SCALE GENOMIC DNA]</scope>
    <source>
        <strain>AU 1054</strain>
    </source>
</reference>
<protein>
    <recommendedName>
        <fullName evidence="1">Protein-L-isoaspartate O-methyltransferase</fullName>
        <ecNumber evidence="1">2.1.1.77</ecNumber>
    </recommendedName>
    <alternativeName>
        <fullName evidence="1">L-isoaspartyl protein carboxyl methyltransferase</fullName>
    </alternativeName>
    <alternativeName>
        <fullName evidence="1">Protein L-isoaspartyl methyltransferase</fullName>
    </alternativeName>
    <alternativeName>
        <fullName evidence="1">Protein-beta-aspartate methyltransferase</fullName>
        <shortName evidence="1">PIMT</shortName>
    </alternativeName>
</protein>
<proteinExistence type="inferred from homology"/>